<organism>
    <name type="scientific">Schizosaccharomyces pombe (strain 972 / ATCC 24843)</name>
    <name type="common">Fission yeast</name>
    <dbReference type="NCBI Taxonomy" id="284812"/>
    <lineage>
        <taxon>Eukaryota</taxon>
        <taxon>Fungi</taxon>
        <taxon>Dikarya</taxon>
        <taxon>Ascomycota</taxon>
        <taxon>Taphrinomycotina</taxon>
        <taxon>Schizosaccharomycetes</taxon>
        <taxon>Schizosaccharomycetales</taxon>
        <taxon>Schizosaccharomycetaceae</taxon>
        <taxon>Schizosaccharomyces</taxon>
    </lineage>
</organism>
<evidence type="ECO:0000250" key="1"/>
<evidence type="ECO:0000250" key="2">
    <source>
        <dbReference type="UniProtKB" id="P14324"/>
    </source>
</evidence>
<evidence type="ECO:0000269" key="3">
    <source>
    </source>
</evidence>
<evidence type="ECO:0000269" key="4">
    <source>
    </source>
</evidence>
<evidence type="ECO:0000305" key="5"/>
<proteinExistence type="evidence at protein level"/>
<sequence length="351" mass="40946">MVNDFNEKNGIKKRLLDFFPVVLEGIREILESMQYFPEETEKLLYSIKRNTLGGKNNRGLAVLQSLTSLINRELEEAEFRDAALLGWLIEILQGCFLMADDIMDQSIKRRGLDCWYLVVGVRRAINESQLLEACIPLLIRKYFRNMPYYVDLLDTFREVTFLTELGQQEDLLSSRDGEASLRSFDLMKYDFIITYKTSFYSFYLPIKCALLLSRNSNQKAYDTTIKLSKLLGYYFQVQDDYLDCFGDYTVLGKVGMDIQDNKCTWLVCYAEKFASADQLNLLRAHYGKAGSENIAVIKQLYHELQIPELYHKFEDDMVDSISKEIDLIDESTGLKKCIFTKFFQLIYKRSR</sequence>
<accession>O59703</accession>
<keyword id="KW-0125">Carotenoid biosynthesis</keyword>
<keyword id="KW-0963">Cytoplasm</keyword>
<keyword id="KW-0414">Isoprene biosynthesis</keyword>
<keyword id="KW-0460">Magnesium</keyword>
<keyword id="KW-0479">Metal-binding</keyword>
<keyword id="KW-0539">Nucleus</keyword>
<keyword id="KW-0653">Protein transport</keyword>
<keyword id="KW-1185">Reference proteome</keyword>
<keyword id="KW-0808">Transferase</keyword>
<keyword id="KW-0813">Transport</keyword>
<name>GGPPS_SCHPO</name>
<dbReference type="EC" id="2.5.1.-"/>
<dbReference type="EC" id="2.5.1.1"/>
<dbReference type="EC" id="2.5.1.29"/>
<dbReference type="EC" id="2.5.1.10"/>
<dbReference type="EMBL" id="CU329671">
    <property type="protein sequence ID" value="CAA19054.1"/>
    <property type="molecule type" value="Genomic_DNA"/>
</dbReference>
<dbReference type="PIR" id="T40301">
    <property type="entry name" value="T40301"/>
</dbReference>
<dbReference type="RefSeq" id="NP_595334.1">
    <property type="nucleotide sequence ID" value="NM_001021242.2"/>
</dbReference>
<dbReference type="SMR" id="O59703"/>
<dbReference type="BioGRID" id="277449">
    <property type="interactions" value="10"/>
</dbReference>
<dbReference type="FunCoup" id="O59703">
    <property type="interactions" value="432"/>
</dbReference>
<dbReference type="STRING" id="284812.O59703"/>
<dbReference type="iPTMnet" id="O59703"/>
<dbReference type="PaxDb" id="4896-SPBC36.06c.1"/>
<dbReference type="EnsemblFungi" id="SPBC36.06c.1">
    <property type="protein sequence ID" value="SPBC36.06c.1:pep"/>
    <property type="gene ID" value="SPBC36.06c"/>
</dbReference>
<dbReference type="GeneID" id="2540933"/>
<dbReference type="KEGG" id="spo:2540933"/>
<dbReference type="PomBase" id="SPBC36.06c">
    <property type="gene designation" value="spo9"/>
</dbReference>
<dbReference type="VEuPathDB" id="FungiDB:SPBC36.06c"/>
<dbReference type="eggNOG" id="KOG0711">
    <property type="taxonomic scope" value="Eukaryota"/>
</dbReference>
<dbReference type="HOGENOM" id="CLU_028376_1_0_1"/>
<dbReference type="InParanoid" id="O59703"/>
<dbReference type="OMA" id="CFLMADD"/>
<dbReference type="PhylomeDB" id="O59703"/>
<dbReference type="BRENDA" id="2.5.1.29">
    <property type="organism ID" value="5613"/>
</dbReference>
<dbReference type="UniPathway" id="UPA00259">
    <property type="reaction ID" value="UER00368"/>
</dbReference>
<dbReference type="UniPathway" id="UPA00260">
    <property type="reaction ID" value="UER00369"/>
</dbReference>
<dbReference type="UniPathway" id="UPA00389">
    <property type="reaction ID" value="UER00564"/>
</dbReference>
<dbReference type="PRO" id="PR:O59703"/>
<dbReference type="Proteomes" id="UP000002485">
    <property type="component" value="Chromosome II"/>
</dbReference>
<dbReference type="GO" id="GO:0005737">
    <property type="term" value="C:cytoplasm"/>
    <property type="evidence" value="ECO:0000318"/>
    <property type="project" value="GO_Central"/>
</dbReference>
<dbReference type="GO" id="GO:0005829">
    <property type="term" value="C:cytosol"/>
    <property type="evidence" value="ECO:0007005"/>
    <property type="project" value="PomBase"/>
</dbReference>
<dbReference type="GO" id="GO:0005783">
    <property type="term" value="C:endoplasmic reticulum"/>
    <property type="evidence" value="ECO:0000266"/>
    <property type="project" value="PomBase"/>
</dbReference>
<dbReference type="GO" id="GO:0005634">
    <property type="term" value="C:nucleus"/>
    <property type="evidence" value="ECO:0007005"/>
    <property type="project" value="PomBase"/>
</dbReference>
<dbReference type="GO" id="GO:0004337">
    <property type="term" value="F:(2E,6E)-farnesyl diphosphate synthase activity"/>
    <property type="evidence" value="ECO:0000318"/>
    <property type="project" value="GO_Central"/>
</dbReference>
<dbReference type="GO" id="GO:0004161">
    <property type="term" value="F:dimethylallyltranstransferase activity"/>
    <property type="evidence" value="ECO:0000318"/>
    <property type="project" value="GO_Central"/>
</dbReference>
<dbReference type="GO" id="GO:0004311">
    <property type="term" value="F:geranylgeranyl diphosphate synthase activity"/>
    <property type="evidence" value="ECO:0007669"/>
    <property type="project" value="UniProtKB-EC"/>
</dbReference>
<dbReference type="GO" id="GO:0046872">
    <property type="term" value="F:metal ion binding"/>
    <property type="evidence" value="ECO:0007669"/>
    <property type="project" value="UniProtKB-KW"/>
</dbReference>
<dbReference type="GO" id="GO:0045337">
    <property type="term" value="P:farnesyl diphosphate biosynthetic process"/>
    <property type="evidence" value="ECO:0000318"/>
    <property type="project" value="GO_Central"/>
</dbReference>
<dbReference type="GO" id="GO:0010142">
    <property type="term" value="P:farnesyl diphosphate biosynthetic process, mevalonate pathway"/>
    <property type="evidence" value="ECO:0000269"/>
    <property type="project" value="PomBase"/>
</dbReference>
<dbReference type="GO" id="GO:0033384">
    <property type="term" value="P:geranyl diphosphate biosynthetic process"/>
    <property type="evidence" value="ECO:0007669"/>
    <property type="project" value="UniProtKB-UniPathway"/>
</dbReference>
<dbReference type="GO" id="GO:0033386">
    <property type="term" value="P:geranylgeranyl diphosphate biosynthetic process"/>
    <property type="evidence" value="ECO:0000315"/>
    <property type="project" value="PomBase"/>
</dbReference>
<dbReference type="GO" id="GO:0015031">
    <property type="term" value="P:protein transport"/>
    <property type="evidence" value="ECO:0007669"/>
    <property type="project" value="UniProtKB-KW"/>
</dbReference>
<dbReference type="CDD" id="cd00685">
    <property type="entry name" value="Trans_IPPS_HT"/>
    <property type="match status" value="1"/>
</dbReference>
<dbReference type="Gene3D" id="1.10.600.10">
    <property type="entry name" value="Farnesyl Diphosphate Synthase"/>
    <property type="match status" value="1"/>
</dbReference>
<dbReference type="InterPro" id="IPR039702">
    <property type="entry name" value="FPS1-like"/>
</dbReference>
<dbReference type="InterPro" id="IPR008949">
    <property type="entry name" value="Isoprenoid_synthase_dom_sf"/>
</dbReference>
<dbReference type="InterPro" id="IPR000092">
    <property type="entry name" value="Polyprenyl_synt"/>
</dbReference>
<dbReference type="InterPro" id="IPR033749">
    <property type="entry name" value="Polyprenyl_synt_CS"/>
</dbReference>
<dbReference type="PANTHER" id="PTHR11525:SF0">
    <property type="entry name" value="FARNESYL PYROPHOSPHATE SYNTHASE"/>
    <property type="match status" value="1"/>
</dbReference>
<dbReference type="PANTHER" id="PTHR11525">
    <property type="entry name" value="FARNESYL-PYROPHOSPHATE SYNTHETASE"/>
    <property type="match status" value="1"/>
</dbReference>
<dbReference type="Pfam" id="PF00348">
    <property type="entry name" value="polyprenyl_synt"/>
    <property type="match status" value="1"/>
</dbReference>
<dbReference type="SFLD" id="SFLDS00005">
    <property type="entry name" value="Isoprenoid_Synthase_Type_I"/>
    <property type="match status" value="1"/>
</dbReference>
<dbReference type="SFLD" id="SFLDG01017">
    <property type="entry name" value="Polyprenyl_Transferase_Like"/>
    <property type="match status" value="1"/>
</dbReference>
<dbReference type="SUPFAM" id="SSF48576">
    <property type="entry name" value="Terpenoid synthases"/>
    <property type="match status" value="1"/>
</dbReference>
<dbReference type="PROSITE" id="PS00723">
    <property type="entry name" value="POLYPRENYL_SYNTHASE_1"/>
    <property type="match status" value="1"/>
</dbReference>
<dbReference type="PROSITE" id="PS00444">
    <property type="entry name" value="POLYPRENYL_SYNTHASE_2"/>
    <property type="match status" value="1"/>
</dbReference>
<feature type="chain" id="PRO_0000339411" description="Geranylgeranyl pyrophosphate synthase">
    <location>
        <begin position="1"/>
        <end position="351"/>
    </location>
</feature>
<feature type="binding site" evidence="2">
    <location>
        <position position="55"/>
    </location>
    <ligand>
        <name>isopentenyl diphosphate</name>
        <dbReference type="ChEBI" id="CHEBI:128769"/>
    </ligand>
</feature>
<feature type="binding site" evidence="2">
    <location>
        <position position="58"/>
    </location>
    <ligand>
        <name>isopentenyl diphosphate</name>
        <dbReference type="ChEBI" id="CHEBI:128769"/>
    </ligand>
</feature>
<feature type="binding site" evidence="2">
    <location>
        <position position="93"/>
    </location>
    <ligand>
        <name>isopentenyl diphosphate</name>
        <dbReference type="ChEBI" id="CHEBI:128769"/>
    </ligand>
</feature>
<feature type="binding site" evidence="2">
    <location>
        <position position="100"/>
    </location>
    <ligand>
        <name>Mg(2+)</name>
        <dbReference type="ChEBI" id="CHEBI:18420"/>
        <label>1</label>
    </ligand>
</feature>
<feature type="binding site" evidence="2">
    <location>
        <position position="100"/>
    </location>
    <ligand>
        <name>Mg(2+)</name>
        <dbReference type="ChEBI" id="CHEBI:18420"/>
        <label>2</label>
    </ligand>
</feature>
<feature type="binding site" evidence="2">
    <location>
        <position position="104"/>
    </location>
    <ligand>
        <name>Mg(2+)</name>
        <dbReference type="ChEBI" id="CHEBI:18420"/>
        <label>1</label>
    </ligand>
</feature>
<feature type="binding site" evidence="2">
    <location>
        <position position="104"/>
    </location>
    <ligand>
        <name>Mg(2+)</name>
        <dbReference type="ChEBI" id="CHEBI:18420"/>
        <label>2</label>
    </ligand>
</feature>
<feature type="binding site" evidence="1">
    <location>
        <position position="109"/>
    </location>
    <ligand>
        <name>dimethylallyl diphosphate</name>
        <dbReference type="ChEBI" id="CHEBI:57623"/>
    </ligand>
</feature>
<feature type="binding site" evidence="2">
    <location>
        <position position="110"/>
    </location>
    <ligand>
        <name>isopentenyl diphosphate</name>
        <dbReference type="ChEBI" id="CHEBI:128769"/>
    </ligand>
</feature>
<feature type="binding site" evidence="1">
    <location>
        <position position="196"/>
    </location>
    <ligand>
        <name>dimethylallyl diphosphate</name>
        <dbReference type="ChEBI" id="CHEBI:57623"/>
    </ligand>
</feature>
<feature type="binding site" evidence="1">
    <location>
        <position position="197"/>
    </location>
    <ligand>
        <name>dimethylallyl diphosphate</name>
        <dbReference type="ChEBI" id="CHEBI:57623"/>
    </ligand>
</feature>
<feature type="binding site" evidence="1">
    <location>
        <position position="236"/>
    </location>
    <ligand>
        <name>dimethylallyl diphosphate</name>
        <dbReference type="ChEBI" id="CHEBI:57623"/>
    </ligand>
</feature>
<feature type="binding site" evidence="1">
    <location>
        <position position="253"/>
    </location>
    <ligand>
        <name>dimethylallyl diphosphate</name>
        <dbReference type="ChEBI" id="CHEBI:57623"/>
    </ligand>
</feature>
<feature type="binding site" evidence="1">
    <location>
        <position position="262"/>
    </location>
    <ligand>
        <name>dimethylallyl diphosphate</name>
        <dbReference type="ChEBI" id="CHEBI:57623"/>
    </ligand>
</feature>
<feature type="mutagenesis site" description="No complement of lethality of fps1-delete strain." evidence="4">
    <original>C</original>
    <variation>F</variation>
    <location>
        <position position="95"/>
    </location>
</feature>
<feature type="mutagenesis site" description="No GGPP synthase activity." evidence="4">
    <original>R</original>
    <variation>Q</variation>
    <location>
        <position position="109"/>
    </location>
</feature>
<protein>
    <recommendedName>
        <fullName>Geranylgeranyl pyrophosphate synthase</fullName>
        <shortName>GGPP synthase</shortName>
        <shortName>GGPPSase</shortName>
        <ecNumber>2.5.1.-</ecNumber>
    </recommendedName>
    <alternativeName>
        <fullName>(2E,6E)-farnesyl diphosphate synthase</fullName>
    </alternativeName>
    <alternativeName>
        <fullName>Dimethylallyltranstransferase</fullName>
        <ecNumber>2.5.1.1</ecNumber>
    </alternativeName>
    <alternativeName>
        <fullName>Farnesyl diphosphate synthase</fullName>
    </alternativeName>
    <alternativeName>
        <fullName>Farnesyltranstransferase</fullName>
        <ecNumber>2.5.1.29</ecNumber>
    </alternativeName>
    <alternativeName>
        <fullName>Geranylgeranyl diphosphate synthase</fullName>
    </alternativeName>
    <alternativeName>
        <fullName>Geranyltranstransferase</fullName>
        <ecNumber>2.5.1.10</ecNumber>
    </alternativeName>
    <alternativeName>
        <fullName>Sporulation-specific protein 9</fullName>
    </alternativeName>
</protein>
<reference key="1">
    <citation type="journal article" date="2002" name="Nature">
        <title>The genome sequence of Schizosaccharomyces pombe.</title>
        <authorList>
            <person name="Wood V."/>
            <person name="Gwilliam R."/>
            <person name="Rajandream M.A."/>
            <person name="Lyne M.H."/>
            <person name="Lyne R."/>
            <person name="Stewart A."/>
            <person name="Sgouros J.G."/>
            <person name="Peat N."/>
            <person name="Hayles J."/>
            <person name="Baker S.G."/>
            <person name="Basham D."/>
            <person name="Bowman S."/>
            <person name="Brooks K."/>
            <person name="Brown D."/>
            <person name="Brown S."/>
            <person name="Chillingworth T."/>
            <person name="Churcher C.M."/>
            <person name="Collins M."/>
            <person name="Connor R."/>
            <person name="Cronin A."/>
            <person name="Davis P."/>
            <person name="Feltwell T."/>
            <person name="Fraser A."/>
            <person name="Gentles S."/>
            <person name="Goble A."/>
            <person name="Hamlin N."/>
            <person name="Harris D.E."/>
            <person name="Hidalgo J."/>
            <person name="Hodgson G."/>
            <person name="Holroyd S."/>
            <person name="Hornsby T."/>
            <person name="Howarth S."/>
            <person name="Huckle E.J."/>
            <person name="Hunt S."/>
            <person name="Jagels K."/>
            <person name="James K.D."/>
            <person name="Jones L."/>
            <person name="Jones M."/>
            <person name="Leather S."/>
            <person name="McDonald S."/>
            <person name="McLean J."/>
            <person name="Mooney P."/>
            <person name="Moule S."/>
            <person name="Mungall K.L."/>
            <person name="Murphy L.D."/>
            <person name="Niblett D."/>
            <person name="Odell C."/>
            <person name="Oliver K."/>
            <person name="O'Neil S."/>
            <person name="Pearson D."/>
            <person name="Quail M.A."/>
            <person name="Rabbinowitsch E."/>
            <person name="Rutherford K.M."/>
            <person name="Rutter S."/>
            <person name="Saunders D."/>
            <person name="Seeger K."/>
            <person name="Sharp S."/>
            <person name="Skelton J."/>
            <person name="Simmonds M.N."/>
            <person name="Squares R."/>
            <person name="Squares S."/>
            <person name="Stevens K."/>
            <person name="Taylor K."/>
            <person name="Taylor R.G."/>
            <person name="Tivey A."/>
            <person name="Walsh S.V."/>
            <person name="Warren T."/>
            <person name="Whitehead S."/>
            <person name="Woodward J.R."/>
            <person name="Volckaert G."/>
            <person name="Aert R."/>
            <person name="Robben J."/>
            <person name="Grymonprez B."/>
            <person name="Weltjens I."/>
            <person name="Vanstreels E."/>
            <person name="Rieger M."/>
            <person name="Schaefer M."/>
            <person name="Mueller-Auer S."/>
            <person name="Gabel C."/>
            <person name="Fuchs M."/>
            <person name="Duesterhoeft A."/>
            <person name="Fritzc C."/>
            <person name="Holzer E."/>
            <person name="Moestl D."/>
            <person name="Hilbert H."/>
            <person name="Borzym K."/>
            <person name="Langer I."/>
            <person name="Beck A."/>
            <person name="Lehrach H."/>
            <person name="Reinhardt R."/>
            <person name="Pohl T.M."/>
            <person name="Eger P."/>
            <person name="Zimmermann W."/>
            <person name="Wedler H."/>
            <person name="Wambutt R."/>
            <person name="Purnelle B."/>
            <person name="Goffeau A."/>
            <person name="Cadieu E."/>
            <person name="Dreano S."/>
            <person name="Gloux S."/>
            <person name="Lelaure V."/>
            <person name="Mottier S."/>
            <person name="Galibert F."/>
            <person name="Aves S.J."/>
            <person name="Xiang Z."/>
            <person name="Hunt C."/>
            <person name="Moore K."/>
            <person name="Hurst S.M."/>
            <person name="Lucas M."/>
            <person name="Rochet M."/>
            <person name="Gaillardin C."/>
            <person name="Tallada V.A."/>
            <person name="Garzon A."/>
            <person name="Thode G."/>
            <person name="Daga R.R."/>
            <person name="Cruzado L."/>
            <person name="Jimenez J."/>
            <person name="Sanchez M."/>
            <person name="del Rey F."/>
            <person name="Benito J."/>
            <person name="Dominguez A."/>
            <person name="Revuelta J.L."/>
            <person name="Moreno S."/>
            <person name="Armstrong J."/>
            <person name="Forsburg S.L."/>
            <person name="Cerutti L."/>
            <person name="Lowe T."/>
            <person name="McCombie W.R."/>
            <person name="Paulsen I."/>
            <person name="Potashkin J."/>
            <person name="Shpakovski G.V."/>
            <person name="Ussery D."/>
            <person name="Barrell B.G."/>
            <person name="Nurse P."/>
        </authorList>
    </citation>
    <scope>NUCLEOTIDE SEQUENCE [LARGE SCALE GENOMIC DNA]</scope>
    <source>
        <strain>972 / ATCC 24843</strain>
    </source>
</reference>
<reference key="2">
    <citation type="journal article" date="2006" name="Nat. Biotechnol.">
        <title>ORFeome cloning and global analysis of protein localization in the fission yeast Schizosaccharomyces pombe.</title>
        <authorList>
            <person name="Matsuyama A."/>
            <person name="Arai R."/>
            <person name="Yashiroda Y."/>
            <person name="Shirai A."/>
            <person name="Kamata A."/>
            <person name="Sekido S."/>
            <person name="Kobayashi Y."/>
            <person name="Hashimoto A."/>
            <person name="Hamamoto M."/>
            <person name="Hiraoka Y."/>
            <person name="Horinouchi S."/>
            <person name="Yoshida M."/>
        </authorList>
    </citation>
    <scope>SUBCELLULAR LOCATION [LARGE SCALE ANALYSIS]</scope>
</reference>
<reference key="3">
    <citation type="journal article" date="2007" name="Mol. Biol. Cell">
        <title>Geranylgeranyl diphosphate synthase in fission yeast is a heteromer of farnesyl diphosphate synthase (FPS), Fps1, and an FPS-like protein, Spo9, essential for sporulation.</title>
        <authorList>
            <person name="Ye Y."/>
            <person name="Fujii M."/>
            <person name="Hirata A."/>
            <person name="Kawamukai M."/>
            <person name="Shimoda C."/>
            <person name="Nakamura T."/>
        </authorList>
    </citation>
    <scope>FUNCTION</scope>
    <scope>INTERACTION WITH FPS1</scope>
    <scope>MUTAGENESIS OF CYS-95 AND ARG-109</scope>
</reference>
<comment type="function">
    <text evidence="4">Catalyzes the trans-addition of the 3 molecules of IPP onto DMAPP to form geranylgeranyl pyrophosphate. Required for the membrane attachment of ypt7 and rhb1. May be involved in vesicle trafficking and protein sorting. Required for forespore membrane formation.</text>
</comment>
<comment type="catalytic activity">
    <reaction>
        <text>isopentenyl diphosphate + dimethylallyl diphosphate = (2E)-geranyl diphosphate + diphosphate</text>
        <dbReference type="Rhea" id="RHEA:22408"/>
        <dbReference type="ChEBI" id="CHEBI:33019"/>
        <dbReference type="ChEBI" id="CHEBI:57623"/>
        <dbReference type="ChEBI" id="CHEBI:58057"/>
        <dbReference type="ChEBI" id="CHEBI:128769"/>
        <dbReference type="EC" id="2.5.1.1"/>
    </reaction>
</comment>
<comment type="catalytic activity">
    <reaction>
        <text>isopentenyl diphosphate + (2E)-geranyl diphosphate = (2E,6E)-farnesyl diphosphate + diphosphate</text>
        <dbReference type="Rhea" id="RHEA:19361"/>
        <dbReference type="ChEBI" id="CHEBI:33019"/>
        <dbReference type="ChEBI" id="CHEBI:58057"/>
        <dbReference type="ChEBI" id="CHEBI:128769"/>
        <dbReference type="ChEBI" id="CHEBI:175763"/>
        <dbReference type="EC" id="2.5.1.10"/>
    </reaction>
</comment>
<comment type="catalytic activity">
    <reaction>
        <text>isopentenyl diphosphate + (2E,6E)-farnesyl diphosphate = (2E,6E,10E)-geranylgeranyl diphosphate + diphosphate</text>
        <dbReference type="Rhea" id="RHEA:17653"/>
        <dbReference type="ChEBI" id="CHEBI:33019"/>
        <dbReference type="ChEBI" id="CHEBI:58756"/>
        <dbReference type="ChEBI" id="CHEBI:128769"/>
        <dbReference type="ChEBI" id="CHEBI:175763"/>
        <dbReference type="EC" id="2.5.1.29"/>
    </reaction>
</comment>
<comment type="cofactor">
    <cofactor evidence="1">
        <name>Mg(2+)</name>
        <dbReference type="ChEBI" id="CHEBI:18420"/>
    </cofactor>
    <text evidence="1">Binds 2 Mg(2+) ions per subunit.</text>
</comment>
<comment type="pathway">
    <text>Isoprenoid biosynthesis; farnesyl diphosphate biosynthesis; farnesyl diphosphate from geranyl diphosphate and isopentenyl diphosphate: step 1/1.</text>
</comment>
<comment type="pathway">
    <text>Isoprenoid biosynthesis; geranyl diphosphate biosynthesis; geranyl diphosphate from dimethylallyl diphosphate and isopentenyl diphosphate: step 1/1.</text>
</comment>
<comment type="pathway">
    <text>Isoprenoid biosynthesis; geranylgeranyl diphosphate biosynthesis; geranylgeranyl diphosphate from farnesyl diphosphate and isopentenyl diphosphate: step 1/1.</text>
</comment>
<comment type="subunit">
    <text evidence="4">Interacts with fps1.</text>
</comment>
<comment type="subcellular location">
    <subcellularLocation>
        <location evidence="3">Cytoplasm</location>
    </subcellularLocation>
    <subcellularLocation>
        <location evidence="3">Nucleus</location>
    </subcellularLocation>
</comment>
<comment type="similarity">
    <text evidence="5">Belongs to the FPP/GGPP synthase family.</text>
</comment>
<gene>
    <name type="primary">spo9</name>
    <name type="ORF">SPBC36.06c</name>
</gene>